<comment type="subcellular location">
    <subcellularLocation>
        <location evidence="2">Host membrane</location>
        <topology evidence="2">Multi-pass membrane protein</topology>
    </subcellularLocation>
</comment>
<name>Y330_ATV</name>
<protein>
    <recommendedName>
        <fullName>Putative acetyltransferase ORF330</fullName>
        <ecNumber>2.3.-.-</ecNumber>
    </recommendedName>
</protein>
<sequence length="330" mass="38954">MPSFVFKSRKLKHTTMQKNYDPRIAQLRGFASLSVAFYHLWTLQILPLSIFRPGWLGVPLFLELSIFLLLQRLDVNSDMKKYFAKRIKRIYPLYYLSATAVFLVELYYFHDHVTIYELFLHYVFLSSVLAPFSFSYVFWTLQLEEWMYLFIPLIHRLSDMRKFLLAVGLILSSFIYGTFIVTLPYNEFHLLYFMPPFWLSAYGWGIIAYILYKNNTKLWSTRSAISFLFLIYVMYLLAPTDNEFLYELTTRVVVYNMVLVVFMLIILNPPKVLSKVSVFLGEISYGIYVWHLLMEELLGVVGILLGVAVAFATEFPLRRKEILLRLRQLG</sequence>
<proteinExistence type="predicted"/>
<feature type="chain" id="PRO_0000389031" description="Putative acetyltransferase ORF330">
    <location>
        <begin position="1"/>
        <end position="330"/>
    </location>
</feature>
<feature type="transmembrane region" description="Helical" evidence="1">
    <location>
        <begin position="29"/>
        <end position="49"/>
    </location>
</feature>
<feature type="transmembrane region" description="Helical" evidence="1">
    <location>
        <begin position="50"/>
        <end position="70"/>
    </location>
</feature>
<feature type="transmembrane region" description="Helical" evidence="1">
    <location>
        <begin position="90"/>
        <end position="110"/>
    </location>
</feature>
<feature type="transmembrane region" description="Helical" evidence="1">
    <location>
        <begin position="118"/>
        <end position="138"/>
    </location>
</feature>
<feature type="transmembrane region" description="Helical" evidence="1">
    <location>
        <begin position="163"/>
        <end position="183"/>
    </location>
</feature>
<feature type="transmembrane region" description="Helical" evidence="1">
    <location>
        <begin position="190"/>
        <end position="210"/>
    </location>
</feature>
<feature type="transmembrane region" description="Helical" evidence="1">
    <location>
        <begin position="225"/>
        <end position="245"/>
    </location>
</feature>
<feature type="transmembrane region" description="Helical" evidence="1">
    <location>
        <begin position="252"/>
        <end position="272"/>
    </location>
</feature>
<feature type="transmembrane region" description="Helical" evidence="1">
    <location>
        <begin position="273"/>
        <end position="293"/>
    </location>
</feature>
<feature type="transmembrane region" description="Helical" evidence="1">
    <location>
        <begin position="297"/>
        <end position="317"/>
    </location>
</feature>
<organismHost>
    <name type="scientific">Acidianus convivator</name>
    <dbReference type="NCBI Taxonomy" id="269667"/>
</organismHost>
<evidence type="ECO:0000255" key="1"/>
<evidence type="ECO:0000305" key="2"/>
<keyword id="KW-0012">Acyltransferase</keyword>
<keyword id="KW-1043">Host membrane</keyword>
<keyword id="KW-0472">Membrane</keyword>
<keyword id="KW-1185">Reference proteome</keyword>
<keyword id="KW-0808">Transferase</keyword>
<keyword id="KW-0812">Transmembrane</keyword>
<keyword id="KW-1133">Transmembrane helix</keyword>
<accession>Q3V4V4</accession>
<reference key="1">
    <citation type="journal article" date="2005" name="Nature">
        <title>Virology: independent virus development outside a host.</title>
        <authorList>
            <person name="Haring M."/>
            <person name="Vestergaard G."/>
            <person name="Rachel R."/>
            <person name="Chen L."/>
            <person name="Garrett R.A."/>
            <person name="Prangishvili D."/>
        </authorList>
    </citation>
    <scope>NUCLEOTIDE SEQUENCE [GENOMIC DNA]</scope>
</reference>
<organism>
    <name type="scientific">Acidianus two-tailed virus</name>
    <name type="common">ATV</name>
    <dbReference type="NCBI Taxonomy" id="315953"/>
    <lineage>
        <taxon>Viruses</taxon>
        <taxon>Viruses incertae sedis</taxon>
        <taxon>Bicaudaviridae</taxon>
        <taxon>Bicaudavirus</taxon>
    </lineage>
</organism>
<dbReference type="EC" id="2.3.-.-"/>
<dbReference type="EMBL" id="AJ888457">
    <property type="protein sequence ID" value="CAI59860.1"/>
    <property type="molecule type" value="Genomic_DNA"/>
</dbReference>
<dbReference type="RefSeq" id="YP_319865.1">
    <property type="nucleotide sequence ID" value="NC_007409.1"/>
</dbReference>
<dbReference type="GeneID" id="4484235"/>
<dbReference type="KEGG" id="vg:4484235"/>
<dbReference type="OrthoDB" id="31128at10239"/>
<dbReference type="Proteomes" id="UP000002150">
    <property type="component" value="Genome"/>
</dbReference>
<dbReference type="GO" id="GO:0033644">
    <property type="term" value="C:host cell membrane"/>
    <property type="evidence" value="ECO:0007669"/>
    <property type="project" value="UniProtKB-SubCell"/>
</dbReference>
<dbReference type="GO" id="GO:0016020">
    <property type="term" value="C:membrane"/>
    <property type="evidence" value="ECO:0007669"/>
    <property type="project" value="UniProtKB-KW"/>
</dbReference>
<dbReference type="GO" id="GO:0016747">
    <property type="term" value="F:acyltransferase activity, transferring groups other than amino-acyl groups"/>
    <property type="evidence" value="ECO:0007669"/>
    <property type="project" value="InterPro"/>
</dbReference>
<dbReference type="GO" id="GO:0000271">
    <property type="term" value="P:polysaccharide biosynthetic process"/>
    <property type="evidence" value="ECO:0007669"/>
    <property type="project" value="TreeGrafter"/>
</dbReference>
<dbReference type="InterPro" id="IPR002656">
    <property type="entry name" value="Acyl_transf_3_dom"/>
</dbReference>
<dbReference type="InterPro" id="IPR050879">
    <property type="entry name" value="Acyltransferase_3"/>
</dbReference>
<dbReference type="PANTHER" id="PTHR23028">
    <property type="entry name" value="ACETYLTRANSFERASE"/>
    <property type="match status" value="1"/>
</dbReference>
<dbReference type="PANTHER" id="PTHR23028:SF53">
    <property type="entry name" value="ACYL_TRANSF_3 DOMAIN-CONTAINING PROTEIN"/>
    <property type="match status" value="1"/>
</dbReference>
<dbReference type="Pfam" id="PF01757">
    <property type="entry name" value="Acyl_transf_3"/>
    <property type="match status" value="1"/>
</dbReference>